<name>LHX3_XENLA</name>
<evidence type="ECO:0000250" key="1">
    <source>
        <dbReference type="UniProtKB" id="P50481"/>
    </source>
</evidence>
<evidence type="ECO:0000255" key="2">
    <source>
        <dbReference type="PROSITE-ProRule" id="PRU00108"/>
    </source>
</evidence>
<evidence type="ECO:0000255" key="3">
    <source>
        <dbReference type="PROSITE-ProRule" id="PRU00125"/>
    </source>
</evidence>
<evidence type="ECO:0000256" key="4">
    <source>
        <dbReference type="SAM" id="MobiDB-lite"/>
    </source>
</evidence>
<evidence type="ECO:0000269" key="5">
    <source>
    </source>
</evidence>
<evidence type="ECO:0000305" key="6"/>
<organism>
    <name type="scientific">Xenopus laevis</name>
    <name type="common">African clawed frog</name>
    <dbReference type="NCBI Taxonomy" id="8355"/>
    <lineage>
        <taxon>Eukaryota</taxon>
        <taxon>Metazoa</taxon>
        <taxon>Chordata</taxon>
        <taxon>Craniata</taxon>
        <taxon>Vertebrata</taxon>
        <taxon>Euteleostomi</taxon>
        <taxon>Amphibia</taxon>
        <taxon>Batrachia</taxon>
        <taxon>Anura</taxon>
        <taxon>Pipoidea</taxon>
        <taxon>Pipidae</taxon>
        <taxon>Xenopodinae</taxon>
        <taxon>Xenopus</taxon>
        <taxon>Xenopus</taxon>
    </lineage>
</organism>
<keyword id="KW-0010">Activator</keyword>
<keyword id="KW-0238">DNA-binding</keyword>
<keyword id="KW-0371">Homeobox</keyword>
<keyword id="KW-0440">LIM domain</keyword>
<keyword id="KW-0479">Metal-binding</keyword>
<keyword id="KW-0539">Nucleus</keyword>
<keyword id="KW-1185">Reference proteome</keyword>
<keyword id="KW-0677">Repeat</keyword>
<keyword id="KW-0804">Transcription</keyword>
<keyword id="KW-0805">Transcription regulation</keyword>
<keyword id="KW-0862">Zinc</keyword>
<protein>
    <recommendedName>
        <fullName>LIM/homeobox protein Lhx3</fullName>
        <shortName>LIM homeobox protein 3</shortName>
    </recommendedName>
    <alternativeName>
        <fullName>Homeobox protein LIM-3</fullName>
        <shortName>xLIM-3</shortName>
    </alternativeName>
</protein>
<comment type="function">
    <text evidence="1">Transcription factor (By similarity). May be involved in the specification and maintenance of differentiation of distinct neuronal and neuroendocrine tissues. Early marker for the pituitary and pineal lineages, it may be involved in specifying these lineages.</text>
</comment>
<comment type="subunit">
    <text evidence="5">Interacts with ldb1 and with the N-terminus of rnf12.</text>
</comment>
<comment type="subcellular location">
    <subcellularLocation>
        <location evidence="6">Nucleus</location>
    </subcellularLocation>
</comment>
<comment type="tissue specificity">
    <text>In dorsal regions at neural tube and tailbud stages and in adults predominantly in the pituitary gland and weakly in the eye and brain.</text>
</comment>
<comment type="developmental stage">
    <text>First detectable at the neural plate stage in the stomodeal-hypophyseal (pituitary) anlage and in the neural plate. At later stages it persists in the pituitary and pineal, retina, hindbrain and spinal cord.</text>
</comment>
<proteinExistence type="evidence at protein level"/>
<accession>P36200</accession>
<reference key="1">
    <citation type="journal article" date="1993" name="Dev. Biol.">
        <title>Expression of LIM class homeobox gene Xlim-3 in Xenopus development is limited to neural and neuroendocrine tissues.</title>
        <authorList>
            <person name="Taira M."/>
            <person name="Hayes W.P."/>
            <person name="Otani H."/>
            <person name="Dawid I.B."/>
        </authorList>
    </citation>
    <scope>NUCLEOTIDE SEQUENCE [MRNA]</scope>
    <source>
        <tissue>Brain</tissue>
    </source>
</reference>
<reference key="2">
    <citation type="journal article" date="1992" name="Genes Dev.">
        <title>The LIM domain-containing homeo box gene Xlim-1 is expressed specifically in the organizer region of Xenopus gastrula embryos.</title>
        <authorList>
            <person name="Taira M."/>
            <person name="Jamrich M."/>
            <person name="Good P.J."/>
            <person name="Dawid I.B."/>
        </authorList>
    </citation>
    <scope>NUCLEOTIDE SEQUENCE [MRNA] OF 162-200</scope>
</reference>
<reference key="3">
    <citation type="journal article" date="2003" name="Development">
        <title>Selective degradation of excess Ldb1 by Rnf12/RLIM confers proper Ldb1 expression levels and Xlim-1/Ldb1 stoichiometry in Xenopus organizer functions.</title>
        <authorList>
            <person name="Hiratani I."/>
            <person name="Yamamoto N."/>
            <person name="Mochizuki T."/>
            <person name="Ohmori S.-Y."/>
            <person name="Taira M."/>
        </authorList>
    </citation>
    <scope>INTERACTION WITH LDB1 AND RNF12</scope>
</reference>
<dbReference type="EMBL" id="Z22702">
    <property type="protein sequence ID" value="CAA80402.1"/>
    <property type="molecule type" value="mRNA"/>
</dbReference>
<dbReference type="EMBL" id="Z11589">
    <property type="protein sequence ID" value="CAA77674.1"/>
    <property type="molecule type" value="mRNA"/>
</dbReference>
<dbReference type="PIR" id="S38821">
    <property type="entry name" value="S38821"/>
</dbReference>
<dbReference type="RefSeq" id="NP_001081623.1">
    <property type="nucleotide sequence ID" value="NM_001088154.1"/>
</dbReference>
<dbReference type="SMR" id="P36200"/>
<dbReference type="GeneID" id="397959"/>
<dbReference type="KEGG" id="xla:397959"/>
<dbReference type="AGR" id="Xenbase:XB-GENE-865930"/>
<dbReference type="CTD" id="397959"/>
<dbReference type="Xenbase" id="XB-GENE-865930">
    <property type="gene designation" value="lhx3.L"/>
</dbReference>
<dbReference type="OrthoDB" id="10068367at2759"/>
<dbReference type="Proteomes" id="UP000186698">
    <property type="component" value="Chromosome 8L"/>
</dbReference>
<dbReference type="Bgee" id="397959">
    <property type="expression patterns" value="Expressed in camera-type eye and 4 other cell types or tissues"/>
</dbReference>
<dbReference type="GO" id="GO:0005634">
    <property type="term" value="C:nucleus"/>
    <property type="evidence" value="ECO:0000318"/>
    <property type="project" value="GO_Central"/>
</dbReference>
<dbReference type="GO" id="GO:0000981">
    <property type="term" value="F:DNA-binding transcription factor activity, RNA polymerase II-specific"/>
    <property type="evidence" value="ECO:0000318"/>
    <property type="project" value="GO_Central"/>
</dbReference>
<dbReference type="GO" id="GO:0000977">
    <property type="term" value="F:RNA polymerase II transcription regulatory region sequence-specific DNA binding"/>
    <property type="evidence" value="ECO:0000318"/>
    <property type="project" value="GO_Central"/>
</dbReference>
<dbReference type="GO" id="GO:0001221">
    <property type="term" value="F:transcription coregulator binding"/>
    <property type="evidence" value="ECO:0000353"/>
    <property type="project" value="UniProtKB"/>
</dbReference>
<dbReference type="GO" id="GO:0008270">
    <property type="term" value="F:zinc ion binding"/>
    <property type="evidence" value="ECO:0007669"/>
    <property type="project" value="InterPro"/>
</dbReference>
<dbReference type="GO" id="GO:0030182">
    <property type="term" value="P:neuron differentiation"/>
    <property type="evidence" value="ECO:0000318"/>
    <property type="project" value="GO_Central"/>
</dbReference>
<dbReference type="GO" id="GO:0006357">
    <property type="term" value="P:regulation of transcription by RNA polymerase II"/>
    <property type="evidence" value="ECO:0000318"/>
    <property type="project" value="GO_Central"/>
</dbReference>
<dbReference type="CDD" id="cd00086">
    <property type="entry name" value="homeodomain"/>
    <property type="match status" value="1"/>
</dbReference>
<dbReference type="CDD" id="cd09467">
    <property type="entry name" value="LIM1_Lhx3b"/>
    <property type="match status" value="1"/>
</dbReference>
<dbReference type="CDD" id="cd09376">
    <property type="entry name" value="LIM2_Lhx3_Lhx4"/>
    <property type="match status" value="1"/>
</dbReference>
<dbReference type="FunFam" id="2.10.110.10:FF:000120">
    <property type="entry name" value="Insulin gene enhancer protein ISL-2"/>
    <property type="match status" value="1"/>
</dbReference>
<dbReference type="FunFam" id="1.10.10.60:FF:000219">
    <property type="entry name" value="LIM/homeobox protein Lhx3"/>
    <property type="match status" value="1"/>
</dbReference>
<dbReference type="FunFam" id="2.10.110.10:FF:000032">
    <property type="entry name" value="LIM/homeobox protein Lhx3"/>
    <property type="match status" value="1"/>
</dbReference>
<dbReference type="Gene3D" id="2.10.110.10">
    <property type="entry name" value="Cysteine Rich Protein"/>
    <property type="match status" value="2"/>
</dbReference>
<dbReference type="Gene3D" id="1.10.10.60">
    <property type="entry name" value="Homeodomain-like"/>
    <property type="match status" value="1"/>
</dbReference>
<dbReference type="InterPro" id="IPR001356">
    <property type="entry name" value="HD"/>
</dbReference>
<dbReference type="InterPro" id="IPR017970">
    <property type="entry name" value="Homeobox_CS"/>
</dbReference>
<dbReference type="InterPro" id="IPR009057">
    <property type="entry name" value="Homeodomain-like_sf"/>
</dbReference>
<dbReference type="InterPro" id="IPR049594">
    <property type="entry name" value="Lhx3/4-like_LIM2"/>
</dbReference>
<dbReference type="InterPro" id="IPR049593">
    <property type="entry name" value="Lhx3_LIM1"/>
</dbReference>
<dbReference type="InterPro" id="IPR050453">
    <property type="entry name" value="LIM_Homeobox_TF"/>
</dbReference>
<dbReference type="InterPro" id="IPR001781">
    <property type="entry name" value="Znf_LIM"/>
</dbReference>
<dbReference type="PANTHER" id="PTHR24208">
    <property type="entry name" value="LIM/HOMEOBOX PROTEIN LHX"/>
    <property type="match status" value="1"/>
</dbReference>
<dbReference type="PANTHER" id="PTHR24208:SF91">
    <property type="entry name" value="LIM_HOMEOBOX PROTEIN LHX3"/>
    <property type="match status" value="1"/>
</dbReference>
<dbReference type="Pfam" id="PF00046">
    <property type="entry name" value="Homeodomain"/>
    <property type="match status" value="1"/>
</dbReference>
<dbReference type="Pfam" id="PF00412">
    <property type="entry name" value="LIM"/>
    <property type="match status" value="2"/>
</dbReference>
<dbReference type="SMART" id="SM00389">
    <property type="entry name" value="HOX"/>
    <property type="match status" value="1"/>
</dbReference>
<dbReference type="SMART" id="SM00132">
    <property type="entry name" value="LIM"/>
    <property type="match status" value="2"/>
</dbReference>
<dbReference type="SUPFAM" id="SSF57716">
    <property type="entry name" value="Glucocorticoid receptor-like (DNA-binding domain)"/>
    <property type="match status" value="2"/>
</dbReference>
<dbReference type="SUPFAM" id="SSF46689">
    <property type="entry name" value="Homeodomain-like"/>
    <property type="match status" value="1"/>
</dbReference>
<dbReference type="PROSITE" id="PS00027">
    <property type="entry name" value="HOMEOBOX_1"/>
    <property type="match status" value="1"/>
</dbReference>
<dbReference type="PROSITE" id="PS50071">
    <property type="entry name" value="HOMEOBOX_2"/>
    <property type="match status" value="1"/>
</dbReference>
<dbReference type="PROSITE" id="PS00478">
    <property type="entry name" value="LIM_DOMAIN_1"/>
    <property type="match status" value="2"/>
</dbReference>
<dbReference type="PROSITE" id="PS50023">
    <property type="entry name" value="LIM_DOMAIN_2"/>
    <property type="match status" value="2"/>
</dbReference>
<feature type="chain" id="PRO_0000075786" description="LIM/homeobox protein Lhx3">
    <location>
        <begin position="1"/>
        <end position="395"/>
    </location>
</feature>
<feature type="domain" description="LIM zinc-binding 1" evidence="3">
    <location>
        <begin position="28"/>
        <end position="78"/>
    </location>
</feature>
<feature type="domain" description="LIM zinc-binding 2" evidence="3">
    <location>
        <begin position="87"/>
        <end position="141"/>
    </location>
</feature>
<feature type="DNA-binding region" description="Homeobox" evidence="2">
    <location>
        <begin position="154"/>
        <end position="213"/>
    </location>
</feature>
<feature type="region of interest" description="Disordered" evidence="4">
    <location>
        <begin position="208"/>
        <end position="304"/>
    </location>
</feature>
<feature type="region of interest" description="Disordered" evidence="4">
    <location>
        <begin position="363"/>
        <end position="383"/>
    </location>
</feature>
<feature type="compositionally biased region" description="Polar residues" evidence="4">
    <location>
        <begin position="257"/>
        <end position="278"/>
    </location>
</feature>
<feature type="sequence conflict" description="In Ref. 2; CAA77674." evidence="6" ref="2">
    <original>N</original>
    <variation>D</variation>
    <location>
        <position position="174"/>
    </location>
</feature>
<gene>
    <name type="primary">lhx3</name>
    <name type="synonym">lim3</name>
</gene>
<sequence length="395" mass="44031">MLLERVRTGTQKSSDMCGYTGSPEIPQCAGCNQHIVDRFILKVLDRHWHSKCLKCNDCQIQLAEKCFSRGDSVYCKDDFFKRFGTKCAACQQGIPPTQVVRRAQEFVYHLHCFACIVCKRQLATGDEFYLMEDSRLVCKADYETAKQREAESTAKRPRTTITAKQLETLKNAYNNSPKPARHVREQLSSETGLDMRVVQVWFQNRRAKEKRLKKDAGRQRWGQYFRNMKRSRGNSKSDKDSIQEEGPDSDAEVSFTDEPSMSEMNHSNGIYNSLNDSSPVLGRQAGSNGPFSLEHGGIPTQDQYHNLRSNSPYGIPQSPASLQSMPGHQSLLSNLAFPDTGLGIIGQGGQGVAPTMRVIGVNGPSSDLSTGSSGGYPDFPVSPASWLDEVDHTQF</sequence>